<sequence>MADEEAEQERLSCGEGGCVAELQRLGERLQELELQLRESRVPAVEAATDYCQQLCQTLLEYAEKWKTSEDPLPLLEVYTVAIQSYVKARPYLTSECENVALVLERLALSCVELLLCLPVELSDKQWEQFQTLVQVAHEKLMENGSCELHFLATLAQETGVWKNPVLCTILSQEPLDKDKVNEFLAFEGPILLDMRIKHLIKTNQLSQATALAKLCSDHPEIGIKGSFKQTYLVCLCTSSPNGKLIEEISEVDCKDALEMICNLESEGDEKSALVLCTAFLSRQLQQGDMYCAWELTLFWSKLQQRVEPSIQVYLERCRQLSLLTKTVYHIFFLIKVINSETEGAGLATCIELCVKALRLESTENTEVKISICKTISCLLPDDLEVKRACQLSEFLIEPTVDAYYAVEMLYNQPDQKYDEENLPIPNSLRCELLLVLKTQWPFDPEFWDWKTLKRQCLALMGEEASIVSSIDELNDSEVYEKVVDYQEESKETSMNGLSGGVGANSGLLKDIGDEKQKKREIKQLRERGFISARFRNWQAYMQYCVLCDKEFLGHRIVRHAQKHYKDGIYSCPICAKNFNSKETFVPHVTLHVKQSSKERLAAMKPLRRLGRPPKITTTNENQKTNTVAKQEQRPIKKNSLYSTDFIVFNDNDGSDDENDDKDKSYEPEVIPVQKPVPVNEFNCPVTFCKKGFKYFKNLIAHVKGHKDNEDAKRFLEMQSKKVICQYCRRHFVSVTHLNDHLQMHCGSKPYICIQMKCKAGFNSYAELLTHRKEHQVFRAKCMFPKCGRIFSEAYLLYDHEAQHYNTYTCKFTGCGKVYRSQGELEKHLDDHSTPPEKVLPPEAQLNSSGDSIQPSEVNQNTAENIEKERSMLPSENNIENSLLADRSDAWDKSKAESAVTKQDQISASELRQANGPLSNGLENPATTPLLQSSEVAVSIKVSLNQGIEDNFGKQENSTVEGSGEALVTDLHTPVEDTCNDLCHPGFQERKEQDCFNDAHVTQNSLVNSETLKIGDLTPQNLERQVNNLMTFSVQNQAAFQNNLPTSKFECGDNVKTSSNLYNLPLKTLESIAFVPPQSDLSNSLGTPSVPPKAPVQKFSCQVEGCTRTYNSSQSIGKHMKTAHPDQYAAFKMQRKSKKGQKANNLNTPNNGKFVYFLPSPVNSSNPFFTSQTKANGNPACSAQLQHVSPPIFPAHLASVSTPLLSSMESVINPNITSQDKNEQGGMLCSQMENLPSTALPAQMEDLTKTVLPLNIDSGSDPFLPLPAESSSMSLFPSPADSGTNSVFSQLENNTNHYSSQIEGNTNSSFLKGGNGENAVFPSQVNVANNFSSTNAQQSAPEKVKKDRGRGPNGKERKPKHNKRAKWPAIIRDGKFICSRCYRAFTNPRSLGGHLSKRSYCKPLDGAEIAQELLQSNGQPSLLASMILSTNAVNLQQPQQSTFNPEACFKDPSFLQLLAENRSPAFLPNTFPRSGVTNFNTSVSQEGSEIIKQALETAGIPSTFEGAEMLSHVSTGCVSDASQVNATVMPNPTVPPLLHTVCHPNTLLTNQNRTSNSKTSSIEECSSLPVFPTNDLLLKTVENGLCSSSFPNSGGPSQNFTSNSSRVSVISGPQNTRSSHLNKKGNSASKRRKKVAPPLIAPNASQNLVTSDLTTMGLIAKSVEIPTTNLHSNVIPTCEPQSLVENLTQKLNNVNNQLFMTDVKENFKTSLESHTVLAPLTLKTENGDSQMMALNSCTTSINSDLQISEDNVIQNFEKTLEIIKTAMNSQILEVKSGSQGAGETSQNAQINYNIQLPSVNTVQNNKLPDSSPFSSFISVMPTKSNIPQSEVSHKEDQIQEILEGLQKLKLENDLSTPASQCVLINTSVTLTPTPVKSTADITVIQPVSEMINIQFNDKVNKPFVCQNQGCNYSAMTKDALFKHYGKIHQYTPEMILEIKKNQLKFAPFKCVVPTCTKTFTRNSNLRAHCQLVHHFTTEEMVKLKIKRPYGRKSQSENVPASRSTQVKKQLAMTEENKKESQPALELRAETQNTHSNVAVIPEKQLVEKKSPDKTESSLQVITVTSEQCNTNALTNTQTKGRKIRRHKKEKEEKKRKKPVSQSLEFPTRYSPYRPYRCVHQGCFAAFTIQQNLILHYQAVHKSDLPAFSAEVEEESEAGKESEETETKQTLKEFRCQVSDCSRIFQAITGLIQHYMKLHEMTPEEIESMTASVDVGKFPCDQLECKSSFTTYLNYVVHLEADHGIGLRASKTEEDGVYKCDCEGCDRIYATRSNLLRHIFNKHNDKHKAHLIRPRRLTPGQENMSSKANQEKSKSKHRGTKHSRCGKEGIKMPKTKRKKKNNLENKNAKIVQIEENKPYSLKRGKHVYSIKARNDALSECTSRFVTQYPCMIKGCTSVVTSESNIIRHYKCHKLSKAFTSQHRNLLIVFKRCCNSQVKETSEQEGAKNDVKDSDTCVSESNDNSRTTATVSQKEVEKNEKDEMDELTELFITKLINEDSTSVETQANTSSNVSNDFQEDNLCQSERQKASNLKRVNKEKNVSQNKKRKVEKAEPASAAELSSVRKEEETAVAIQTIEEHPASFDWSSFKPMGFEVSFLKFLEESAVKQKKNTDKDHPNTGNKKGSHSNSRKNIDKTAVTSGNHVCPCKESETFVQFANPSQLQCSDNVKIVLDKNLKDCTELVLKQLQEMKPTVSLKKLEVHSNDPDMSVMKDISIGKATGRGQY</sequence>
<dbReference type="EMBL" id="AL139274">
    <property type="status" value="NOT_ANNOTATED_CDS"/>
    <property type="molecule type" value="Genomic_DNA"/>
</dbReference>
<dbReference type="EMBL" id="BX537746">
    <property type="protein sequence ID" value="CAD97823.1"/>
    <property type="status" value="ALT_SEQ"/>
    <property type="molecule type" value="mRNA"/>
</dbReference>
<dbReference type="EMBL" id="AK023626">
    <property type="protein sequence ID" value="BAB14622.1"/>
    <property type="status" value="ALT_INIT"/>
    <property type="molecule type" value="mRNA"/>
</dbReference>
<dbReference type="EMBL" id="AK023712">
    <property type="protein sequence ID" value="BAB14654.1"/>
    <property type="status" value="ALT_INIT"/>
    <property type="molecule type" value="mRNA"/>
</dbReference>
<dbReference type="EMBL" id="AB011102">
    <property type="protein sequence ID" value="BAA25456.1"/>
    <property type="molecule type" value="mRNA"/>
</dbReference>
<dbReference type="CCDS" id="CCDS47457.1">
    <molecule id="O60281-1"/>
</dbReference>
<dbReference type="RefSeq" id="NP_055836.1">
    <molecule id="O60281-1"/>
    <property type="nucleotide sequence ID" value="NM_015021.3"/>
</dbReference>
<dbReference type="PDB" id="1X3C">
    <property type="method" value="NMR"/>
    <property type="chains" value="A=2094-2153"/>
</dbReference>
<dbReference type="PDB" id="7N2D">
    <property type="method" value="EM"/>
    <property type="resolution" value="1.50 A"/>
    <property type="chains" value="A=534-542"/>
</dbReference>
<dbReference type="PDBsum" id="1X3C"/>
<dbReference type="PDBsum" id="7N2D"/>
<dbReference type="BMRB" id="O60281"/>
<dbReference type="SMR" id="O60281"/>
<dbReference type="BioGRID" id="116675">
    <property type="interactions" value="65"/>
</dbReference>
<dbReference type="FunCoup" id="O60281">
    <property type="interactions" value="3709"/>
</dbReference>
<dbReference type="IntAct" id="O60281">
    <property type="interactions" value="28"/>
</dbReference>
<dbReference type="MINT" id="O60281"/>
<dbReference type="STRING" id="9606.ENSP00000358590"/>
<dbReference type="GlyCosmos" id="O60281">
    <property type="glycosylation" value="2 sites, 1 glycan"/>
</dbReference>
<dbReference type="GlyGen" id="O60281">
    <property type="glycosylation" value="4 sites, 1 O-linked glycan (2 sites)"/>
</dbReference>
<dbReference type="iPTMnet" id="O60281"/>
<dbReference type="PhosphoSitePlus" id="O60281"/>
<dbReference type="BioMuta" id="ZNF292"/>
<dbReference type="jPOST" id="O60281"/>
<dbReference type="MassIVE" id="O60281"/>
<dbReference type="PaxDb" id="9606-ENSP00000358590"/>
<dbReference type="PeptideAtlas" id="O60281"/>
<dbReference type="ProteomicsDB" id="49309">
    <molecule id="O60281-1"/>
</dbReference>
<dbReference type="ProteomicsDB" id="49310">
    <molecule id="O60281-2"/>
</dbReference>
<dbReference type="Pumba" id="O60281"/>
<dbReference type="Antibodypedia" id="31770">
    <property type="antibodies" value="53 antibodies from 17 providers"/>
</dbReference>
<dbReference type="DNASU" id="23036"/>
<dbReference type="Ensembl" id="ENST00000369577.8">
    <molecule id="O60281-1"/>
    <property type="protein sequence ID" value="ENSP00000358590.3"/>
    <property type="gene ID" value="ENSG00000188994.14"/>
</dbReference>
<dbReference type="GeneID" id="23036"/>
<dbReference type="KEGG" id="hsa:23036"/>
<dbReference type="MANE-Select" id="ENST00000369577.8">
    <property type="protein sequence ID" value="ENSP00000358590.3"/>
    <property type="RefSeq nucleotide sequence ID" value="NM_015021.3"/>
    <property type="RefSeq protein sequence ID" value="NP_055836.1"/>
</dbReference>
<dbReference type="UCSC" id="uc003plm.5">
    <molecule id="O60281-1"/>
    <property type="organism name" value="human"/>
</dbReference>
<dbReference type="AGR" id="HGNC:18410"/>
<dbReference type="CTD" id="23036"/>
<dbReference type="DisGeNET" id="23036"/>
<dbReference type="GeneCards" id="ZNF292"/>
<dbReference type="HGNC" id="HGNC:18410">
    <property type="gene designation" value="ZNF292"/>
</dbReference>
<dbReference type="HPA" id="ENSG00000188994">
    <property type="expression patterns" value="Low tissue specificity"/>
</dbReference>
<dbReference type="MalaCards" id="ZNF292"/>
<dbReference type="MIM" id="616213">
    <property type="type" value="gene"/>
</dbReference>
<dbReference type="MIM" id="619188">
    <property type="type" value="phenotype"/>
</dbReference>
<dbReference type="neXtProt" id="NX_O60281"/>
<dbReference type="OpenTargets" id="ENSG00000188994"/>
<dbReference type="PharmGKB" id="PA134945416"/>
<dbReference type="VEuPathDB" id="HostDB:ENSG00000188994"/>
<dbReference type="eggNOG" id="KOG1721">
    <property type="taxonomic scope" value="Eukaryota"/>
</dbReference>
<dbReference type="GeneTree" id="ENSGT00950000183034"/>
<dbReference type="HOGENOM" id="CLU_000520_0_0_1"/>
<dbReference type="InParanoid" id="O60281"/>
<dbReference type="OMA" id="LIVFKQC"/>
<dbReference type="OrthoDB" id="427030at2759"/>
<dbReference type="PAN-GO" id="O60281">
    <property type="GO annotations" value="4 GO annotations based on evolutionary models"/>
</dbReference>
<dbReference type="PhylomeDB" id="O60281"/>
<dbReference type="TreeFam" id="TF350813"/>
<dbReference type="PathwayCommons" id="O60281"/>
<dbReference type="SignaLink" id="O60281"/>
<dbReference type="SIGNOR" id="O60281"/>
<dbReference type="BioGRID-ORCS" id="23036">
    <property type="hits" value="22 hits in 1187 CRISPR screens"/>
</dbReference>
<dbReference type="ChiTaRS" id="ZNF292">
    <property type="organism name" value="human"/>
</dbReference>
<dbReference type="EvolutionaryTrace" id="O60281"/>
<dbReference type="GenomeRNAi" id="23036"/>
<dbReference type="Pharos" id="O60281">
    <property type="development level" value="Tbio"/>
</dbReference>
<dbReference type="PRO" id="PR:O60281"/>
<dbReference type="Proteomes" id="UP000005640">
    <property type="component" value="Chromosome 6"/>
</dbReference>
<dbReference type="RNAct" id="O60281">
    <property type="molecule type" value="protein"/>
</dbReference>
<dbReference type="Bgee" id="ENSG00000188994">
    <property type="expression patterns" value="Expressed in caput epididymis and 214 other cell types or tissues"/>
</dbReference>
<dbReference type="ExpressionAtlas" id="O60281">
    <property type="expression patterns" value="baseline and differential"/>
</dbReference>
<dbReference type="GO" id="GO:0005634">
    <property type="term" value="C:nucleus"/>
    <property type="evidence" value="ECO:0000318"/>
    <property type="project" value="GO_Central"/>
</dbReference>
<dbReference type="GO" id="GO:0003677">
    <property type="term" value="F:DNA binding"/>
    <property type="evidence" value="ECO:0000318"/>
    <property type="project" value="GO_Central"/>
</dbReference>
<dbReference type="GO" id="GO:0001228">
    <property type="term" value="F:DNA-binding transcription activator activity, RNA polymerase II-specific"/>
    <property type="evidence" value="ECO:0007669"/>
    <property type="project" value="Ensembl"/>
</dbReference>
<dbReference type="GO" id="GO:0000981">
    <property type="term" value="F:DNA-binding transcription factor activity, RNA polymerase II-specific"/>
    <property type="evidence" value="ECO:0000318"/>
    <property type="project" value="GO_Central"/>
</dbReference>
<dbReference type="GO" id="GO:0008270">
    <property type="term" value="F:zinc ion binding"/>
    <property type="evidence" value="ECO:0007669"/>
    <property type="project" value="UniProtKB-KW"/>
</dbReference>
<dbReference type="GO" id="GO:0006357">
    <property type="term" value="P:regulation of transcription by RNA polymerase II"/>
    <property type="evidence" value="ECO:0000318"/>
    <property type="project" value="GO_Central"/>
</dbReference>
<dbReference type="FunFam" id="3.30.160.60:FF:001066">
    <property type="entry name" value="Zinc finger protein 292"/>
    <property type="match status" value="1"/>
</dbReference>
<dbReference type="FunFam" id="3.30.160.60:FF:001293">
    <property type="entry name" value="Zinc finger protein 292"/>
    <property type="match status" value="1"/>
</dbReference>
<dbReference type="Gene3D" id="3.30.160.60">
    <property type="entry name" value="Classic Zinc Finger"/>
    <property type="match status" value="3"/>
</dbReference>
<dbReference type="InterPro" id="IPR052251">
    <property type="entry name" value="GH-ZnFinger_Regulators"/>
</dbReference>
<dbReference type="InterPro" id="IPR036236">
    <property type="entry name" value="Znf_C2H2_sf"/>
</dbReference>
<dbReference type="InterPro" id="IPR013087">
    <property type="entry name" value="Znf_C2H2_type"/>
</dbReference>
<dbReference type="PANTHER" id="PTHR15507:SF14">
    <property type="entry name" value="ZINC FINGER PROTEIN 292"/>
    <property type="match status" value="1"/>
</dbReference>
<dbReference type="PANTHER" id="PTHR15507">
    <property type="entry name" value="ZINC FINGER PROTEIN RLF"/>
    <property type="match status" value="1"/>
</dbReference>
<dbReference type="Pfam" id="PF00096">
    <property type="entry name" value="zf-C2H2"/>
    <property type="match status" value="1"/>
</dbReference>
<dbReference type="Pfam" id="PF25420">
    <property type="entry name" value="zf-C2H2_ZN292"/>
    <property type="match status" value="1"/>
</dbReference>
<dbReference type="SMART" id="SM00355">
    <property type="entry name" value="ZnF_C2H2"/>
    <property type="match status" value="16"/>
</dbReference>
<dbReference type="SUPFAM" id="SSF57667">
    <property type="entry name" value="beta-beta-alpha zinc fingers"/>
    <property type="match status" value="2"/>
</dbReference>
<dbReference type="PROSITE" id="PS00028">
    <property type="entry name" value="ZINC_FINGER_C2H2_1"/>
    <property type="match status" value="13"/>
</dbReference>
<dbReference type="PROSITE" id="PS50157">
    <property type="entry name" value="ZINC_FINGER_C2H2_2"/>
    <property type="match status" value="11"/>
</dbReference>
<name>ZN292_HUMAN</name>
<protein>
    <recommendedName>
        <fullName>Zinc finger protein 292</fullName>
    </recommendedName>
</protein>
<proteinExistence type="evidence at protein level"/>
<comment type="function">
    <text>May be involved in transcriptional regulation.</text>
</comment>
<comment type="subcellular location">
    <subcellularLocation>
        <location evidence="8">Nucleus</location>
    </subcellularLocation>
</comment>
<comment type="alternative products">
    <event type="alternative splicing"/>
    <isoform>
        <id>O60281-1</id>
        <name>1</name>
        <sequence type="displayed"/>
    </isoform>
    <isoform>
        <id>O60281-2</id>
        <name>2</name>
        <sequence type="described" ref="VSP_038857 VSP_038858"/>
    </isoform>
</comment>
<comment type="disease" evidence="5">
    <disease id="DI-06050">
        <name>Intellectual developmental disorder, autosomal dominant 64</name>
        <acronym>MRD64</acronym>
        <description>An autosomal dominant form of intellectual disability, a disorder characterized by significantly below average general intellectual functioning associated with impairments in adaptive behavior and manifested during the developmental period. MRD64 is characterized by mildly to severely impaired intellectual development, speech delay, and autism spectrum disorder in most patients. Additional variable features may include motor delay, attention deficit-hyperactivity disorder, and non-specific dysmorphic features.</description>
        <dbReference type="MIM" id="619188"/>
    </disease>
    <text>The disease is caused by variants affecting the gene represented in this entry.</text>
</comment>
<comment type="similarity">
    <text evidence="8">Belongs to the krueppel C2H2-type zinc-finger protein family.</text>
</comment>
<comment type="sequence caution" evidence="8">
    <conflict type="erroneous initiation">
        <sequence resource="EMBL-CDS" id="BAB14622"/>
    </conflict>
</comment>
<comment type="sequence caution" evidence="8">
    <conflict type="erroneous initiation">
        <sequence resource="EMBL-CDS" id="BAB14654"/>
    </conflict>
</comment>
<comment type="sequence caution" evidence="8">
    <conflict type="erroneous initiation">
        <sequence resource="EMBL-CDS" id="CAD97823"/>
    </conflict>
    <text>Truncated N-terminus.</text>
</comment>
<comment type="sequence caution" evidence="8">
    <conflict type="frameshift">
        <sequence resource="EMBL-CDS" id="CAD97823"/>
    </conflict>
</comment>
<comment type="sequence caution" evidence="8">
    <conflict type="miscellaneous discrepancy">
        <sequence resource="EMBL-CDS" id="CAD97823"/>
    </conflict>
    <text>Contaminating sequence. Potential poly-A sequence.</text>
</comment>
<keyword id="KW-0002">3D-structure</keyword>
<keyword id="KW-0007">Acetylation</keyword>
<keyword id="KW-0025">Alternative splicing</keyword>
<keyword id="KW-1268">Autism spectrum disorder</keyword>
<keyword id="KW-0175">Coiled coil</keyword>
<keyword id="KW-0225">Disease variant</keyword>
<keyword id="KW-0238">DNA-binding</keyword>
<keyword id="KW-0991">Intellectual disability</keyword>
<keyword id="KW-0479">Metal-binding</keyword>
<keyword id="KW-0539">Nucleus</keyword>
<keyword id="KW-0597">Phosphoprotein</keyword>
<keyword id="KW-1267">Proteomics identification</keyword>
<keyword id="KW-1185">Reference proteome</keyword>
<keyword id="KW-0677">Repeat</keyword>
<keyword id="KW-0804">Transcription</keyword>
<keyword id="KW-0805">Transcription regulation</keyword>
<keyword id="KW-0862">Zinc</keyword>
<keyword id="KW-0863">Zinc-finger</keyword>
<reference key="1">
    <citation type="journal article" date="2003" name="Nature">
        <title>The DNA sequence and analysis of human chromosome 6.</title>
        <authorList>
            <person name="Mungall A.J."/>
            <person name="Palmer S.A."/>
            <person name="Sims S.K."/>
            <person name="Edwards C.A."/>
            <person name="Ashurst J.L."/>
            <person name="Wilming L."/>
            <person name="Jones M.C."/>
            <person name="Horton R."/>
            <person name="Hunt S.E."/>
            <person name="Scott C.E."/>
            <person name="Gilbert J.G.R."/>
            <person name="Clamp M.E."/>
            <person name="Bethel G."/>
            <person name="Milne S."/>
            <person name="Ainscough R."/>
            <person name="Almeida J.P."/>
            <person name="Ambrose K.D."/>
            <person name="Andrews T.D."/>
            <person name="Ashwell R.I.S."/>
            <person name="Babbage A.K."/>
            <person name="Bagguley C.L."/>
            <person name="Bailey J."/>
            <person name="Banerjee R."/>
            <person name="Barker D.J."/>
            <person name="Barlow K.F."/>
            <person name="Bates K."/>
            <person name="Beare D.M."/>
            <person name="Beasley H."/>
            <person name="Beasley O."/>
            <person name="Bird C.P."/>
            <person name="Blakey S.E."/>
            <person name="Bray-Allen S."/>
            <person name="Brook J."/>
            <person name="Brown A.J."/>
            <person name="Brown J.Y."/>
            <person name="Burford D.C."/>
            <person name="Burrill W."/>
            <person name="Burton J."/>
            <person name="Carder C."/>
            <person name="Carter N.P."/>
            <person name="Chapman J.C."/>
            <person name="Clark S.Y."/>
            <person name="Clark G."/>
            <person name="Clee C.M."/>
            <person name="Clegg S."/>
            <person name="Cobley V."/>
            <person name="Collier R.E."/>
            <person name="Collins J.E."/>
            <person name="Colman L.K."/>
            <person name="Corby N.R."/>
            <person name="Coville G.J."/>
            <person name="Culley K.M."/>
            <person name="Dhami P."/>
            <person name="Davies J."/>
            <person name="Dunn M."/>
            <person name="Earthrowl M.E."/>
            <person name="Ellington A.E."/>
            <person name="Evans K.A."/>
            <person name="Faulkner L."/>
            <person name="Francis M.D."/>
            <person name="Frankish A."/>
            <person name="Frankland J."/>
            <person name="French L."/>
            <person name="Garner P."/>
            <person name="Garnett J."/>
            <person name="Ghori M.J."/>
            <person name="Gilby L.M."/>
            <person name="Gillson C.J."/>
            <person name="Glithero R.J."/>
            <person name="Grafham D.V."/>
            <person name="Grant M."/>
            <person name="Gribble S."/>
            <person name="Griffiths C."/>
            <person name="Griffiths M.N.D."/>
            <person name="Hall R."/>
            <person name="Halls K.S."/>
            <person name="Hammond S."/>
            <person name="Harley J.L."/>
            <person name="Hart E.A."/>
            <person name="Heath P.D."/>
            <person name="Heathcott R."/>
            <person name="Holmes S.J."/>
            <person name="Howden P.J."/>
            <person name="Howe K.L."/>
            <person name="Howell G.R."/>
            <person name="Huckle E."/>
            <person name="Humphray S.J."/>
            <person name="Humphries M.D."/>
            <person name="Hunt A.R."/>
            <person name="Johnson C.M."/>
            <person name="Joy A.A."/>
            <person name="Kay M."/>
            <person name="Keenan S.J."/>
            <person name="Kimberley A.M."/>
            <person name="King A."/>
            <person name="Laird G.K."/>
            <person name="Langford C."/>
            <person name="Lawlor S."/>
            <person name="Leongamornlert D.A."/>
            <person name="Leversha M."/>
            <person name="Lloyd C.R."/>
            <person name="Lloyd D.M."/>
            <person name="Loveland J.E."/>
            <person name="Lovell J."/>
            <person name="Martin S."/>
            <person name="Mashreghi-Mohammadi M."/>
            <person name="Maslen G.L."/>
            <person name="Matthews L."/>
            <person name="McCann O.T."/>
            <person name="McLaren S.J."/>
            <person name="McLay K."/>
            <person name="McMurray A."/>
            <person name="Moore M.J.F."/>
            <person name="Mullikin J.C."/>
            <person name="Niblett D."/>
            <person name="Nickerson T."/>
            <person name="Novik K.L."/>
            <person name="Oliver K."/>
            <person name="Overton-Larty E.K."/>
            <person name="Parker A."/>
            <person name="Patel R."/>
            <person name="Pearce A.V."/>
            <person name="Peck A.I."/>
            <person name="Phillimore B.J.C.T."/>
            <person name="Phillips S."/>
            <person name="Plumb R.W."/>
            <person name="Porter K.M."/>
            <person name="Ramsey Y."/>
            <person name="Ranby S.A."/>
            <person name="Rice C.M."/>
            <person name="Ross M.T."/>
            <person name="Searle S.M."/>
            <person name="Sehra H.K."/>
            <person name="Sheridan E."/>
            <person name="Skuce C.D."/>
            <person name="Smith S."/>
            <person name="Smith M."/>
            <person name="Spraggon L."/>
            <person name="Squares S.L."/>
            <person name="Steward C.A."/>
            <person name="Sycamore N."/>
            <person name="Tamlyn-Hall G."/>
            <person name="Tester J."/>
            <person name="Theaker A.J."/>
            <person name="Thomas D.W."/>
            <person name="Thorpe A."/>
            <person name="Tracey A."/>
            <person name="Tromans A."/>
            <person name="Tubby B."/>
            <person name="Wall M."/>
            <person name="Wallis J.M."/>
            <person name="West A.P."/>
            <person name="White S.S."/>
            <person name="Whitehead S.L."/>
            <person name="Whittaker H."/>
            <person name="Wild A."/>
            <person name="Willey D.J."/>
            <person name="Wilmer T.E."/>
            <person name="Wood J.M."/>
            <person name="Wray P.W."/>
            <person name="Wyatt J.C."/>
            <person name="Young L."/>
            <person name="Younger R.M."/>
            <person name="Bentley D.R."/>
            <person name="Coulson A."/>
            <person name="Durbin R.M."/>
            <person name="Hubbard T."/>
            <person name="Sulston J.E."/>
            <person name="Dunham I."/>
            <person name="Rogers J."/>
            <person name="Beck S."/>
        </authorList>
    </citation>
    <scope>NUCLEOTIDE SEQUENCE [LARGE SCALE GENOMIC DNA]</scope>
</reference>
<reference key="2">
    <citation type="journal article" date="2007" name="BMC Genomics">
        <title>The full-ORF clone resource of the German cDNA consortium.</title>
        <authorList>
            <person name="Bechtel S."/>
            <person name="Rosenfelder H."/>
            <person name="Duda A."/>
            <person name="Schmidt C.P."/>
            <person name="Ernst U."/>
            <person name="Wellenreuther R."/>
            <person name="Mehrle A."/>
            <person name="Schuster C."/>
            <person name="Bahr A."/>
            <person name="Bloecker H."/>
            <person name="Heubner D."/>
            <person name="Hoerlein A."/>
            <person name="Michel G."/>
            <person name="Wedler H."/>
            <person name="Koehrer K."/>
            <person name="Ottenwalder B."/>
            <person name="Poustka A."/>
            <person name="Wiemann S."/>
            <person name="Schupp I."/>
        </authorList>
    </citation>
    <scope>NUCLEOTIDE SEQUENCE [LARGE SCALE MRNA] OF 1-2338 (ISOFORM 1)</scope>
    <scope>VARIANT VAL-1740</scope>
    <source>
        <tissue>Endometrium</tissue>
    </source>
</reference>
<reference key="3">
    <citation type="journal article" date="2004" name="Nat. Genet.">
        <title>Complete sequencing and characterization of 21,243 full-length human cDNAs.</title>
        <authorList>
            <person name="Ota T."/>
            <person name="Suzuki Y."/>
            <person name="Nishikawa T."/>
            <person name="Otsuki T."/>
            <person name="Sugiyama T."/>
            <person name="Irie R."/>
            <person name="Wakamatsu A."/>
            <person name="Hayashi K."/>
            <person name="Sato H."/>
            <person name="Nagai K."/>
            <person name="Kimura K."/>
            <person name="Makita H."/>
            <person name="Sekine M."/>
            <person name="Obayashi M."/>
            <person name="Nishi T."/>
            <person name="Shibahara T."/>
            <person name="Tanaka T."/>
            <person name="Ishii S."/>
            <person name="Yamamoto J."/>
            <person name="Saito K."/>
            <person name="Kawai Y."/>
            <person name="Isono Y."/>
            <person name="Nakamura Y."/>
            <person name="Nagahari K."/>
            <person name="Murakami K."/>
            <person name="Yasuda T."/>
            <person name="Iwayanagi T."/>
            <person name="Wagatsuma M."/>
            <person name="Shiratori A."/>
            <person name="Sudo H."/>
            <person name="Hosoiri T."/>
            <person name="Kaku Y."/>
            <person name="Kodaira H."/>
            <person name="Kondo H."/>
            <person name="Sugawara M."/>
            <person name="Takahashi M."/>
            <person name="Kanda K."/>
            <person name="Yokoi T."/>
            <person name="Furuya T."/>
            <person name="Kikkawa E."/>
            <person name="Omura Y."/>
            <person name="Abe K."/>
            <person name="Kamihara K."/>
            <person name="Katsuta N."/>
            <person name="Sato K."/>
            <person name="Tanikawa M."/>
            <person name="Yamazaki M."/>
            <person name="Ninomiya K."/>
            <person name="Ishibashi T."/>
            <person name="Yamashita H."/>
            <person name="Murakawa K."/>
            <person name="Fujimori K."/>
            <person name="Tanai H."/>
            <person name="Kimata M."/>
            <person name="Watanabe M."/>
            <person name="Hiraoka S."/>
            <person name="Chiba Y."/>
            <person name="Ishida S."/>
            <person name="Ono Y."/>
            <person name="Takiguchi S."/>
            <person name="Watanabe S."/>
            <person name="Yosida M."/>
            <person name="Hotuta T."/>
            <person name="Kusano J."/>
            <person name="Kanehori K."/>
            <person name="Takahashi-Fujii A."/>
            <person name="Hara H."/>
            <person name="Tanase T.-O."/>
            <person name="Nomura Y."/>
            <person name="Togiya S."/>
            <person name="Komai F."/>
            <person name="Hara R."/>
            <person name="Takeuchi K."/>
            <person name="Arita M."/>
            <person name="Imose N."/>
            <person name="Musashino K."/>
            <person name="Yuuki H."/>
            <person name="Oshima A."/>
            <person name="Sasaki N."/>
            <person name="Aotsuka S."/>
            <person name="Yoshikawa Y."/>
            <person name="Matsunawa H."/>
            <person name="Ichihara T."/>
            <person name="Shiohata N."/>
            <person name="Sano S."/>
            <person name="Moriya S."/>
            <person name="Momiyama H."/>
            <person name="Satoh N."/>
            <person name="Takami S."/>
            <person name="Terashima Y."/>
            <person name="Suzuki O."/>
            <person name="Nakagawa S."/>
            <person name="Senoh A."/>
            <person name="Mizoguchi H."/>
            <person name="Goto Y."/>
            <person name="Shimizu F."/>
            <person name="Wakebe H."/>
            <person name="Hishigaki H."/>
            <person name="Watanabe T."/>
            <person name="Sugiyama A."/>
            <person name="Takemoto M."/>
            <person name="Kawakami B."/>
            <person name="Yamazaki M."/>
            <person name="Watanabe K."/>
            <person name="Kumagai A."/>
            <person name="Itakura S."/>
            <person name="Fukuzumi Y."/>
            <person name="Fujimori Y."/>
            <person name="Komiyama M."/>
            <person name="Tashiro H."/>
            <person name="Tanigami A."/>
            <person name="Fujiwara T."/>
            <person name="Ono T."/>
            <person name="Yamada K."/>
            <person name="Fujii Y."/>
            <person name="Ozaki K."/>
            <person name="Hirao M."/>
            <person name="Ohmori Y."/>
            <person name="Kawabata A."/>
            <person name="Hikiji T."/>
            <person name="Kobatake N."/>
            <person name="Inagaki H."/>
            <person name="Ikema Y."/>
            <person name="Okamoto S."/>
            <person name="Okitani R."/>
            <person name="Kawakami T."/>
            <person name="Noguchi S."/>
            <person name="Itoh T."/>
            <person name="Shigeta K."/>
            <person name="Senba T."/>
            <person name="Matsumura K."/>
            <person name="Nakajima Y."/>
            <person name="Mizuno T."/>
            <person name="Morinaga M."/>
            <person name="Sasaki M."/>
            <person name="Togashi T."/>
            <person name="Oyama M."/>
            <person name="Hata H."/>
            <person name="Watanabe M."/>
            <person name="Komatsu T."/>
            <person name="Mizushima-Sugano J."/>
            <person name="Satoh T."/>
            <person name="Shirai Y."/>
            <person name="Takahashi Y."/>
            <person name="Nakagawa K."/>
            <person name="Okumura K."/>
            <person name="Nagase T."/>
            <person name="Nomura N."/>
            <person name="Kikuchi H."/>
            <person name="Masuho Y."/>
            <person name="Yamashita R."/>
            <person name="Nakai K."/>
            <person name="Yada T."/>
            <person name="Nakamura Y."/>
            <person name="Ohara O."/>
            <person name="Isogai T."/>
            <person name="Sugano S."/>
        </authorList>
    </citation>
    <scope>NUCLEOTIDE SEQUENCE [LARGE SCALE MRNA] OF 754-1628 AND 1893-2540 (ISOFORMS 1/2)</scope>
    <source>
        <tissue>Placenta</tissue>
    </source>
</reference>
<reference key="4">
    <citation type="journal article" date="1998" name="DNA Res.">
        <title>Prediction of the coding sequences of unidentified human genes. IX. The complete sequences of 100 new cDNA clones from brain which can code for large proteins in vitro.</title>
        <authorList>
            <person name="Nagase T."/>
            <person name="Ishikawa K."/>
            <person name="Miyajima N."/>
            <person name="Tanaka A."/>
            <person name="Kotani H."/>
            <person name="Nomura N."/>
            <person name="Ohara O."/>
        </authorList>
    </citation>
    <scope>NUCLEOTIDE SEQUENCE [LARGE SCALE MRNA] OF 1161-2723 (ISOFORMS 1/2)</scope>
    <scope>VARIANTS VAL-1740 AND ILE-2045</scope>
    <source>
        <tissue>Brain</tissue>
    </source>
</reference>
<reference key="5">
    <citation type="journal article" date="2009" name="Sci. Signal.">
        <title>Quantitative phosphoproteomic analysis of T cell receptor signaling reveals system-wide modulation of protein-protein interactions.</title>
        <authorList>
            <person name="Mayya V."/>
            <person name="Lundgren D.H."/>
            <person name="Hwang S.-I."/>
            <person name="Rezaul K."/>
            <person name="Wu L."/>
            <person name="Eng J.K."/>
            <person name="Rodionov V."/>
            <person name="Han D.K."/>
        </authorList>
    </citation>
    <scope>PHOSPHORYLATION [LARGE SCALE ANALYSIS] AT SER-1159</scope>
    <scope>IDENTIFICATION BY MASS SPECTROMETRY [LARGE SCALE ANALYSIS]</scope>
    <source>
        <tissue>Leukemic T-cell</tissue>
    </source>
</reference>
<reference key="6">
    <citation type="submission" date="2006-01" db="PDB data bank">
        <title>Solution structure of the C2H2 type zinc-binding domain of human zinc finger protein 292.</title>
        <authorList>
            <consortium name="RIKEN structural genomics initiative (RSGI)"/>
        </authorList>
    </citation>
    <scope>STRUCTURE BY NMR OF 2094-2154</scope>
</reference>
<reference key="7">
    <citation type="journal article" date="2020" name="Genet. Med.">
        <title>De novo and inherited variants in ZNF292 underlie a neurodevelopmental disorder with features of autism spectrum disorder.</title>
        <authorList>
            <consortium name="Undiagnosed Diseases Network,"/>
            <consortium name="University of Washington Center for Mendelian Genomics (UW-CMG),"/>
            <person name="Mirzaa G.M."/>
            <person name="Chong J.X."/>
            <person name="Piton A."/>
            <person name="Popp B."/>
            <person name="Foss K."/>
            <person name="Guo H."/>
            <person name="Harripaul R."/>
            <person name="Xia K."/>
            <person name="Scheck J."/>
            <person name="Aldinger K.A."/>
            <person name="Sajan S.A."/>
            <person name="Tang S."/>
            <person name="Bonneau D."/>
            <person name="Beck A."/>
            <person name="White J."/>
            <person name="Mahida S."/>
            <person name="Harris J."/>
            <person name="Smith-Hicks C."/>
            <person name="Hoyer J."/>
            <person name="Zweier C."/>
            <person name="Reis A."/>
            <person name="Thiel C.T."/>
            <person name="Jamra R.A."/>
            <person name="Zeid N."/>
            <person name="Yang A."/>
            <person name="Farach L.S."/>
            <person name="Walsh L."/>
            <person name="Payne K."/>
            <person name="Rohena L."/>
            <person name="Velinov M."/>
            <person name="Ziegler A."/>
            <person name="Schaefer E."/>
            <person name="Gatinois V."/>
            <person name="Genevieve D."/>
            <person name="Simon M.E.H."/>
            <person name="Kohler J."/>
            <person name="Rotenberg J."/>
            <person name="Wheeler P."/>
            <person name="Larson A."/>
            <person name="Ernst M.E."/>
            <person name="Akman C.I."/>
            <person name="Westman R."/>
            <person name="Blanchet P."/>
            <person name="Schillaci L.A."/>
            <person name="Vincent-Delorme C."/>
            <person name="Gripp K.W."/>
            <person name="Mattioli F."/>
            <person name="Guyader G.L."/>
            <person name="Gerard B."/>
            <person name="Mathieu-Dramard M."/>
            <person name="Morin G."/>
            <person name="Sasanfar R."/>
            <person name="Ayub M."/>
            <person name="Vasli N."/>
            <person name="Yang S."/>
            <person name="Person R."/>
            <person name="Monaghan K.G."/>
            <person name="Nickerson D.A."/>
            <person name="van Binsbergen E."/>
            <person name="Enns G.M."/>
            <person name="Dries A.M."/>
            <person name="Rowe L.J."/>
            <person name="Tsai A.C.H."/>
            <person name="Svihovec S."/>
            <person name="Friedman J."/>
            <person name="Agha Z."/>
            <person name="Qamar R."/>
            <person name="Rodan L.H."/>
            <person name="Martinez-Agosto J."/>
            <person name="Ockeloen C.W."/>
            <person name="Vincent M."/>
            <person name="Sunderland W.J."/>
            <person name="Bernstein J.A."/>
            <person name="Eichler E.E."/>
            <person name="Vincent J.B."/>
            <person name="Bamshad M.J."/>
        </authorList>
    </citation>
    <scope>VARIANTS MRD64 89-ARG--TYR-2723 DEL; 454-ARG--TYR-2723 DEL; VAL-470; 523-GLN--TYR-2723 DEL; 620-GLU--TYR-2723 DEL; 633-ARG--TYR-2723 DEL; 1271-SER--TYR-2723 DEL; 1633-LYS--TYR-2723 DEL; 1729-GLN--TYR-2723 DEL; 2115-ARG--TYR-2723 DEL; 2181-ARG--TYR-2723 DEL; SER-2193 AND ASN-2354 DEL</scope>
    <scope>INVOLVEMENT IN MRD64</scope>
</reference>
<accession>O60281</accession>
<accession>Q5W0B2</accession>
<accession>Q7Z3L7</accession>
<accession>Q9H8G3</accession>
<accession>Q9H8J4</accession>
<gene>
    <name type="primary">ZNF292</name>
    <name type="synonym">KIAA0530</name>
</gene>
<feature type="chain" id="PRO_0000047514" description="Zinc finger protein 292">
    <location>
        <begin position="1"/>
        <end position="2723"/>
    </location>
</feature>
<feature type="zinc finger region" description="C2H2-type 1" evidence="3">
    <location>
        <begin position="569"/>
        <end position="591"/>
    </location>
</feature>
<feature type="zinc finger region" description="C2H2-type 2" evidence="3">
    <location>
        <begin position="681"/>
        <end position="705"/>
    </location>
</feature>
<feature type="zinc finger region" description="C2H2-type 3" evidence="3">
    <location>
        <begin position="722"/>
        <end position="744"/>
    </location>
</feature>
<feature type="zinc finger region" description="C2H2-type 4" evidence="3">
    <location>
        <begin position="750"/>
        <end position="774"/>
    </location>
</feature>
<feature type="zinc finger region" description="C2H2-type 5" evidence="3">
    <location>
        <begin position="779"/>
        <end position="803"/>
    </location>
</feature>
<feature type="zinc finger region" description="C2H2-type 6" evidence="3">
    <location>
        <begin position="807"/>
        <end position="831"/>
    </location>
</feature>
<feature type="zinc finger region" description="C2H2-type 7" evidence="3">
    <location>
        <begin position="1098"/>
        <end position="1123"/>
    </location>
</feature>
<feature type="zinc finger region" description="C2H2-type 8; degenerate" evidence="3">
    <location>
        <begin position="1375"/>
        <end position="1397"/>
    </location>
</feature>
<feature type="zinc finger region" description="C2H2-type 9" evidence="3">
    <location>
        <begin position="1902"/>
        <end position="1927"/>
    </location>
</feature>
<feature type="zinc finger region" description="C2H2-type 10" evidence="3">
    <location>
        <begin position="1947"/>
        <end position="1972"/>
    </location>
</feature>
<feature type="zinc finger region" description="C2H2-type 11" evidence="3">
    <location>
        <begin position="2114"/>
        <end position="2139"/>
    </location>
</feature>
<feature type="zinc finger region" description="C2H2-type 12" evidence="3">
    <location>
        <begin position="2172"/>
        <end position="2197"/>
    </location>
</feature>
<feature type="zinc finger region" description="C2H2-type 13" evidence="3">
    <location>
        <begin position="2216"/>
        <end position="2241"/>
    </location>
</feature>
<feature type="zinc finger region" description="C2H2-type 14" evidence="3">
    <location>
        <begin position="2256"/>
        <end position="2281"/>
    </location>
</feature>
<feature type="zinc finger region" description="C2H2-type 15" evidence="3">
    <location>
        <begin position="2386"/>
        <end position="2410"/>
    </location>
</feature>
<feature type="region of interest" description="Disordered" evidence="4">
    <location>
        <begin position="608"/>
        <end position="633"/>
    </location>
</feature>
<feature type="region of interest" description="Disordered" evidence="4">
    <location>
        <begin position="825"/>
        <end position="860"/>
    </location>
</feature>
<feature type="region of interest" description="Disordered" evidence="4">
    <location>
        <begin position="1331"/>
        <end position="1364"/>
    </location>
</feature>
<feature type="region of interest" description="Disordered" evidence="4">
    <location>
        <begin position="1588"/>
        <end position="1634"/>
    </location>
</feature>
<feature type="region of interest" description="Disordered" evidence="4">
    <location>
        <begin position="1986"/>
        <end position="2023"/>
    </location>
</feature>
<feature type="region of interest" description="Disordered" evidence="4">
    <location>
        <begin position="2074"/>
        <end position="2103"/>
    </location>
</feature>
<feature type="region of interest" description="Disordered" evidence="4">
    <location>
        <begin position="2285"/>
        <end position="2345"/>
    </location>
</feature>
<feature type="region of interest" description="Disordered" evidence="4">
    <location>
        <begin position="2441"/>
        <end position="2480"/>
    </location>
</feature>
<feature type="region of interest" description="Disordered" evidence="4">
    <location>
        <begin position="2530"/>
        <end position="2564"/>
    </location>
</feature>
<feature type="region of interest" description="Disordered" evidence="4">
    <location>
        <begin position="2606"/>
        <end position="2631"/>
    </location>
</feature>
<feature type="coiled-coil region" evidence="2">
    <location>
        <begin position="1827"/>
        <end position="1854"/>
    </location>
</feature>
<feature type="compositionally biased region" description="Polar residues" evidence="4">
    <location>
        <begin position="615"/>
        <end position="629"/>
    </location>
</feature>
<feature type="compositionally biased region" description="Basic and acidic residues" evidence="4">
    <location>
        <begin position="825"/>
        <end position="834"/>
    </location>
</feature>
<feature type="compositionally biased region" description="Polar residues" evidence="4">
    <location>
        <begin position="844"/>
        <end position="860"/>
    </location>
</feature>
<feature type="compositionally biased region" description="Basic and acidic residues" evidence="4">
    <location>
        <begin position="1341"/>
        <end position="1355"/>
    </location>
</feature>
<feature type="compositionally biased region" description="Polar residues" evidence="4">
    <location>
        <begin position="1588"/>
        <end position="1627"/>
    </location>
</feature>
<feature type="compositionally biased region" description="Polar residues" evidence="4">
    <location>
        <begin position="1994"/>
        <end position="2006"/>
    </location>
</feature>
<feature type="compositionally biased region" description="Basic residues" evidence="4">
    <location>
        <begin position="2078"/>
        <end position="2097"/>
    </location>
</feature>
<feature type="compositionally biased region" description="Basic residues" evidence="4">
    <location>
        <begin position="2285"/>
        <end position="2294"/>
    </location>
</feature>
<feature type="compositionally biased region" description="Basic residues" evidence="4">
    <location>
        <begin position="2312"/>
        <end position="2322"/>
    </location>
</feature>
<feature type="compositionally biased region" description="Basic and acidic residues" evidence="4">
    <location>
        <begin position="2441"/>
        <end position="2452"/>
    </location>
</feature>
<feature type="compositionally biased region" description="Polar residues" evidence="4">
    <location>
        <begin position="2453"/>
        <end position="2470"/>
    </location>
</feature>
<feature type="compositionally biased region" description="Basic and acidic residues" evidence="4">
    <location>
        <begin position="2606"/>
        <end position="2615"/>
    </location>
</feature>
<feature type="modified residue" description="Phosphoserine" evidence="1">
    <location>
        <position position="654"/>
    </location>
</feature>
<feature type="modified residue" description="N6-acetyllysine" evidence="1">
    <location>
        <position position="1117"/>
    </location>
</feature>
<feature type="modified residue" description="Phosphoserine" evidence="9">
    <location>
        <position position="1159"/>
    </location>
</feature>
<feature type="modified residue" description="N6-acetyllysine" evidence="1">
    <location>
        <position position="2042"/>
    </location>
</feature>
<feature type="splice variant" id="VSP_038857" description="In isoform 2." evidence="8">
    <location>
        <begin position="1"/>
        <end position="140"/>
    </location>
</feature>
<feature type="splice variant" id="VSP_038858" description="In isoform 2." evidence="8">
    <location>
        <begin position="180"/>
        <end position="184"/>
    </location>
</feature>
<feature type="sequence variant" id="VAR_085258" description="In MRD64." evidence="5">
    <location>
        <begin position="89"/>
        <end position="2723"/>
    </location>
</feature>
<feature type="sequence variant" id="VAR_085259" description="In MRD64." evidence="5">
    <location>
        <begin position="454"/>
        <end position="2723"/>
    </location>
</feature>
<feature type="sequence variant" id="VAR_085260" description="In MRD64; uncertain significance; dbSNP:rs1166797338." evidence="5">
    <original>I</original>
    <variation>V</variation>
    <location>
        <position position="470"/>
    </location>
</feature>
<feature type="sequence variant" id="VAR_085261" description="In MRD64." evidence="5">
    <location>
        <begin position="523"/>
        <end position="2723"/>
    </location>
</feature>
<feature type="sequence variant" id="VAR_085262" description="In MRD64." evidence="5">
    <location>
        <begin position="620"/>
        <end position="2723"/>
    </location>
</feature>
<feature type="sequence variant" id="VAR_085263" description="In MRD64." evidence="5">
    <location>
        <begin position="633"/>
        <end position="2723"/>
    </location>
</feature>
<feature type="sequence variant" id="VAR_085264" description="In MRD64." evidence="5">
    <location>
        <begin position="1271"/>
        <end position="2723"/>
    </location>
</feature>
<feature type="sequence variant" id="VAR_085265" description="In MRD64." evidence="5">
    <location>
        <begin position="1633"/>
        <end position="2723"/>
    </location>
</feature>
<feature type="sequence variant" id="VAR_085266" description="In MRD64." evidence="5">
    <location>
        <begin position="1729"/>
        <end position="2723"/>
    </location>
</feature>
<feature type="sequence variant" id="VAR_062972" description="In dbSNP:rs9362415." evidence="6 7">
    <original>I</original>
    <variation>V</variation>
    <location>
        <position position="1740"/>
    </location>
</feature>
<feature type="sequence variant" id="VAR_062973" description="In dbSNP:rs6910541." evidence="6">
    <original>V</original>
    <variation>I</variation>
    <location>
        <position position="2045"/>
    </location>
</feature>
<feature type="sequence variant" id="VAR_085267" description="In MRD64." evidence="5">
    <location>
        <begin position="2115"/>
        <end position="2723"/>
    </location>
</feature>
<feature type="sequence variant" id="VAR_085268" description="In MRD64." evidence="5">
    <location>
        <begin position="2181"/>
        <end position="2723"/>
    </location>
</feature>
<feature type="sequence variant" id="VAR_085269" description="In MRD64; uncertain significance; dbSNP:rs1554208945." evidence="5">
    <original>Y</original>
    <variation>S</variation>
    <location>
        <position position="2193"/>
    </location>
</feature>
<feature type="sequence variant" id="VAR_085270" description="In MRD64; uncertain significance; dbSNP:rs1775529808." evidence="5">
    <location>
        <position position="2354"/>
    </location>
</feature>
<feature type="sequence conflict" description="In Ref. 3; BAB14622." evidence="8" ref="3">
    <original>E</original>
    <variation>V</variation>
    <location>
        <position position="896"/>
    </location>
</feature>
<feature type="sequence conflict" description="In Ref. 3; BAB14622." evidence="8" ref="3">
    <original>N</original>
    <variation>D</variation>
    <location>
        <position position="1003"/>
    </location>
</feature>
<feature type="sequence conflict" description="In Ref. 2; CAD97823." evidence="8" ref="2">
    <original>S</original>
    <variation>P</variation>
    <location>
        <position position="1217"/>
    </location>
</feature>
<feature type="sequence conflict" description="In Ref. 3; BAB14622." evidence="8" ref="3">
    <original>E</original>
    <variation>K</variation>
    <location>
        <position position="1355"/>
    </location>
</feature>
<feature type="sequence conflict" description="In Ref. 3; BAB14622." evidence="8" ref="3">
    <original>N</original>
    <variation>S</variation>
    <location>
        <position position="1530"/>
    </location>
</feature>
<feature type="sequence conflict" description="In Ref. 2; CAD97823." evidence="8" ref="2">
    <original>K</original>
    <variation>E</variation>
    <location>
        <position position="1846"/>
    </location>
</feature>
<feature type="sequence conflict" description="In Ref. 2; CAD97823." evidence="8" ref="2">
    <original>T</original>
    <variation>A</variation>
    <location>
        <position position="1953"/>
    </location>
</feature>
<feature type="sequence conflict" description="In Ref. 3; BAB14654." evidence="8" ref="3">
    <original>E</original>
    <variation>K</variation>
    <location>
        <position position="2162"/>
    </location>
</feature>
<feature type="strand" evidence="10">
    <location>
        <begin position="2105"/>
        <end position="2108"/>
    </location>
</feature>
<feature type="helix" evidence="10">
    <location>
        <begin position="2128"/>
        <end position="2138"/>
    </location>
</feature>
<feature type="strand" evidence="10">
    <location>
        <begin position="2139"/>
        <end position="2141"/>
    </location>
</feature>
<evidence type="ECO:0000250" key="1">
    <source>
        <dbReference type="UniProtKB" id="Q9Z2U2"/>
    </source>
</evidence>
<evidence type="ECO:0000255" key="2"/>
<evidence type="ECO:0000255" key="3">
    <source>
        <dbReference type="PROSITE-ProRule" id="PRU00042"/>
    </source>
</evidence>
<evidence type="ECO:0000256" key="4">
    <source>
        <dbReference type="SAM" id="MobiDB-lite"/>
    </source>
</evidence>
<evidence type="ECO:0000269" key="5">
    <source>
    </source>
</evidence>
<evidence type="ECO:0000269" key="6">
    <source>
    </source>
</evidence>
<evidence type="ECO:0000269" key="7">
    <source ref="2"/>
</evidence>
<evidence type="ECO:0000305" key="8"/>
<evidence type="ECO:0007744" key="9">
    <source>
    </source>
</evidence>
<evidence type="ECO:0007829" key="10">
    <source>
        <dbReference type="PDB" id="1X3C"/>
    </source>
</evidence>
<organism>
    <name type="scientific">Homo sapiens</name>
    <name type="common">Human</name>
    <dbReference type="NCBI Taxonomy" id="9606"/>
    <lineage>
        <taxon>Eukaryota</taxon>
        <taxon>Metazoa</taxon>
        <taxon>Chordata</taxon>
        <taxon>Craniata</taxon>
        <taxon>Vertebrata</taxon>
        <taxon>Euteleostomi</taxon>
        <taxon>Mammalia</taxon>
        <taxon>Eutheria</taxon>
        <taxon>Euarchontoglires</taxon>
        <taxon>Primates</taxon>
        <taxon>Haplorrhini</taxon>
        <taxon>Catarrhini</taxon>
        <taxon>Hominidae</taxon>
        <taxon>Homo</taxon>
    </lineage>
</organism>